<comment type="function">
    <text evidence="1">Major role in the synthesis of nucleoside triphosphates other than ATP. The ATP gamma phosphate is transferred to the NDP beta phosphate via a ping-pong mechanism, using a phosphorylated active-site intermediate.</text>
</comment>
<comment type="catalytic activity">
    <reaction evidence="1">
        <text>a 2'-deoxyribonucleoside 5'-diphosphate + ATP = a 2'-deoxyribonucleoside 5'-triphosphate + ADP</text>
        <dbReference type="Rhea" id="RHEA:44640"/>
        <dbReference type="ChEBI" id="CHEBI:30616"/>
        <dbReference type="ChEBI" id="CHEBI:61560"/>
        <dbReference type="ChEBI" id="CHEBI:73316"/>
        <dbReference type="ChEBI" id="CHEBI:456216"/>
        <dbReference type="EC" id="2.7.4.6"/>
    </reaction>
</comment>
<comment type="catalytic activity">
    <reaction evidence="1">
        <text>a ribonucleoside 5'-diphosphate + ATP = a ribonucleoside 5'-triphosphate + ADP</text>
        <dbReference type="Rhea" id="RHEA:18113"/>
        <dbReference type="ChEBI" id="CHEBI:30616"/>
        <dbReference type="ChEBI" id="CHEBI:57930"/>
        <dbReference type="ChEBI" id="CHEBI:61557"/>
        <dbReference type="ChEBI" id="CHEBI:456216"/>
        <dbReference type="EC" id="2.7.4.6"/>
    </reaction>
</comment>
<comment type="cofactor">
    <cofactor evidence="1">
        <name>Mg(2+)</name>
        <dbReference type="ChEBI" id="CHEBI:18420"/>
    </cofactor>
</comment>
<comment type="subunit">
    <text evidence="1">Homotetramer.</text>
</comment>
<comment type="subcellular location">
    <subcellularLocation>
        <location evidence="1">Cytoplasm</location>
    </subcellularLocation>
</comment>
<comment type="similarity">
    <text evidence="1">Belongs to the NDK family.</text>
</comment>
<protein>
    <recommendedName>
        <fullName evidence="1">Nucleoside diphosphate kinase</fullName>
        <shortName evidence="1">NDK</shortName>
        <shortName evidence="1">NDP kinase</shortName>
        <ecNumber evidence="1">2.7.4.6</ecNumber>
    </recommendedName>
    <alternativeName>
        <fullName evidence="1">Nucleoside-2-P kinase</fullName>
    </alternativeName>
</protein>
<feature type="chain" id="PRO_1000125029" description="Nucleoside diphosphate kinase">
    <location>
        <begin position="1"/>
        <end position="139"/>
    </location>
</feature>
<feature type="active site" description="Pros-phosphohistidine intermediate" evidence="1">
    <location>
        <position position="117"/>
    </location>
</feature>
<feature type="binding site" evidence="1">
    <location>
        <position position="11"/>
    </location>
    <ligand>
        <name>ATP</name>
        <dbReference type="ChEBI" id="CHEBI:30616"/>
    </ligand>
</feature>
<feature type="binding site" evidence="1">
    <location>
        <position position="59"/>
    </location>
    <ligand>
        <name>ATP</name>
        <dbReference type="ChEBI" id="CHEBI:30616"/>
    </ligand>
</feature>
<feature type="binding site" evidence="1">
    <location>
        <position position="87"/>
    </location>
    <ligand>
        <name>ATP</name>
        <dbReference type="ChEBI" id="CHEBI:30616"/>
    </ligand>
</feature>
<feature type="binding site" evidence="1">
    <location>
        <position position="93"/>
    </location>
    <ligand>
        <name>ATP</name>
        <dbReference type="ChEBI" id="CHEBI:30616"/>
    </ligand>
</feature>
<feature type="binding site" evidence="1">
    <location>
        <position position="104"/>
    </location>
    <ligand>
        <name>ATP</name>
        <dbReference type="ChEBI" id="CHEBI:30616"/>
    </ligand>
</feature>
<feature type="binding site" evidence="1">
    <location>
        <position position="114"/>
    </location>
    <ligand>
        <name>ATP</name>
        <dbReference type="ChEBI" id="CHEBI:30616"/>
    </ligand>
</feature>
<evidence type="ECO:0000255" key="1">
    <source>
        <dbReference type="HAMAP-Rule" id="MF_00451"/>
    </source>
</evidence>
<keyword id="KW-0067">ATP-binding</keyword>
<keyword id="KW-0963">Cytoplasm</keyword>
<keyword id="KW-0418">Kinase</keyword>
<keyword id="KW-0460">Magnesium</keyword>
<keyword id="KW-0479">Metal-binding</keyword>
<keyword id="KW-0546">Nucleotide metabolism</keyword>
<keyword id="KW-0547">Nucleotide-binding</keyword>
<keyword id="KW-0597">Phosphoprotein</keyword>
<keyword id="KW-0808">Transferase</keyword>
<gene>
    <name evidence="1" type="primary">ndk</name>
    <name type="ordered locus">WP0749</name>
</gene>
<reference key="1">
    <citation type="journal article" date="2008" name="Mol. Biol. Evol.">
        <title>Genome evolution of Wolbachia strain wPip from the Culex pipiens group.</title>
        <authorList>
            <person name="Klasson L."/>
            <person name="Walker T."/>
            <person name="Sebaihia M."/>
            <person name="Sanders M.J."/>
            <person name="Quail M.A."/>
            <person name="Lord A."/>
            <person name="Sanders S."/>
            <person name="Earl J."/>
            <person name="O'Neill S.L."/>
            <person name="Thomson N."/>
            <person name="Sinkins S.P."/>
            <person name="Parkhill J."/>
        </authorList>
    </citation>
    <scope>NUCLEOTIDE SEQUENCE [LARGE SCALE GENOMIC DNA]</scope>
    <source>
        <strain>wPip</strain>
    </source>
</reference>
<sequence>MAIERTLSILKPDAVKNNITGSINSYIEKSGLKIIAQRKMLLTKKQAELFYEIHKDRPFFGELVEFMTSGSVIVQVLIGENAVSKYRQIMGATDPKQADKGTIRGDFANDISENRVHGSDSLENAHREIAFFFAECELV</sequence>
<dbReference type="EC" id="2.7.4.6" evidence="1"/>
<dbReference type="EMBL" id="AM999887">
    <property type="protein sequence ID" value="CAQ54857.1"/>
    <property type="molecule type" value="Genomic_DNA"/>
</dbReference>
<dbReference type="RefSeq" id="WP_007302165.1">
    <property type="nucleotide sequence ID" value="NC_010981.1"/>
</dbReference>
<dbReference type="SMR" id="B3CLT9"/>
<dbReference type="KEGG" id="wpi:WP0749"/>
<dbReference type="eggNOG" id="COG0105">
    <property type="taxonomic scope" value="Bacteria"/>
</dbReference>
<dbReference type="HOGENOM" id="CLU_060216_8_1_5"/>
<dbReference type="Proteomes" id="UP000008814">
    <property type="component" value="Chromosome"/>
</dbReference>
<dbReference type="GO" id="GO:0005737">
    <property type="term" value="C:cytoplasm"/>
    <property type="evidence" value="ECO:0007669"/>
    <property type="project" value="UniProtKB-SubCell"/>
</dbReference>
<dbReference type="GO" id="GO:0005524">
    <property type="term" value="F:ATP binding"/>
    <property type="evidence" value="ECO:0007669"/>
    <property type="project" value="UniProtKB-UniRule"/>
</dbReference>
<dbReference type="GO" id="GO:0046872">
    <property type="term" value="F:metal ion binding"/>
    <property type="evidence" value="ECO:0007669"/>
    <property type="project" value="UniProtKB-KW"/>
</dbReference>
<dbReference type="GO" id="GO:0004550">
    <property type="term" value="F:nucleoside diphosphate kinase activity"/>
    <property type="evidence" value="ECO:0007669"/>
    <property type="project" value="UniProtKB-UniRule"/>
</dbReference>
<dbReference type="GO" id="GO:0006241">
    <property type="term" value="P:CTP biosynthetic process"/>
    <property type="evidence" value="ECO:0007669"/>
    <property type="project" value="UniProtKB-UniRule"/>
</dbReference>
<dbReference type="GO" id="GO:0006183">
    <property type="term" value="P:GTP biosynthetic process"/>
    <property type="evidence" value="ECO:0007669"/>
    <property type="project" value="UniProtKB-UniRule"/>
</dbReference>
<dbReference type="GO" id="GO:0006228">
    <property type="term" value="P:UTP biosynthetic process"/>
    <property type="evidence" value="ECO:0007669"/>
    <property type="project" value="UniProtKB-UniRule"/>
</dbReference>
<dbReference type="CDD" id="cd04413">
    <property type="entry name" value="NDPk_I"/>
    <property type="match status" value="1"/>
</dbReference>
<dbReference type="FunFam" id="3.30.70.141:FF:000003">
    <property type="entry name" value="Nucleoside diphosphate kinase"/>
    <property type="match status" value="1"/>
</dbReference>
<dbReference type="Gene3D" id="3.30.70.141">
    <property type="entry name" value="Nucleoside diphosphate kinase-like domain"/>
    <property type="match status" value="1"/>
</dbReference>
<dbReference type="HAMAP" id="MF_00451">
    <property type="entry name" value="NDP_kinase"/>
    <property type="match status" value="1"/>
</dbReference>
<dbReference type="InterPro" id="IPR034907">
    <property type="entry name" value="NDK-like_dom"/>
</dbReference>
<dbReference type="InterPro" id="IPR036850">
    <property type="entry name" value="NDK-like_dom_sf"/>
</dbReference>
<dbReference type="InterPro" id="IPR001564">
    <property type="entry name" value="Nucleoside_diP_kinase"/>
</dbReference>
<dbReference type="InterPro" id="IPR023005">
    <property type="entry name" value="Nucleoside_diP_kinase_AS"/>
</dbReference>
<dbReference type="NCBIfam" id="NF001908">
    <property type="entry name" value="PRK00668.1"/>
    <property type="match status" value="1"/>
</dbReference>
<dbReference type="PANTHER" id="PTHR46161">
    <property type="entry name" value="NUCLEOSIDE DIPHOSPHATE KINASE"/>
    <property type="match status" value="1"/>
</dbReference>
<dbReference type="PANTHER" id="PTHR46161:SF3">
    <property type="entry name" value="NUCLEOSIDE DIPHOSPHATE KINASE DDB_G0292928-RELATED"/>
    <property type="match status" value="1"/>
</dbReference>
<dbReference type="Pfam" id="PF00334">
    <property type="entry name" value="NDK"/>
    <property type="match status" value="1"/>
</dbReference>
<dbReference type="PRINTS" id="PR01243">
    <property type="entry name" value="NUCDPKINASE"/>
</dbReference>
<dbReference type="SMART" id="SM00562">
    <property type="entry name" value="NDK"/>
    <property type="match status" value="1"/>
</dbReference>
<dbReference type="SUPFAM" id="SSF54919">
    <property type="entry name" value="Nucleoside diphosphate kinase, NDK"/>
    <property type="match status" value="1"/>
</dbReference>
<dbReference type="PROSITE" id="PS00469">
    <property type="entry name" value="NDPK"/>
    <property type="match status" value="1"/>
</dbReference>
<dbReference type="PROSITE" id="PS51374">
    <property type="entry name" value="NDPK_LIKE"/>
    <property type="match status" value="1"/>
</dbReference>
<organism>
    <name type="scientific">Wolbachia pipientis subsp. Culex pipiens (strain wPip)</name>
    <dbReference type="NCBI Taxonomy" id="570417"/>
    <lineage>
        <taxon>Bacteria</taxon>
        <taxon>Pseudomonadati</taxon>
        <taxon>Pseudomonadota</taxon>
        <taxon>Alphaproteobacteria</taxon>
        <taxon>Rickettsiales</taxon>
        <taxon>Anaplasmataceae</taxon>
        <taxon>Wolbachieae</taxon>
        <taxon>Wolbachia</taxon>
    </lineage>
</organism>
<accession>B3CLT9</accession>
<proteinExistence type="inferred from homology"/>
<name>NDK_WOLPP</name>